<protein>
    <recommendedName>
        <fullName evidence="1">Phosphoglycolate phosphatase</fullName>
        <shortName evidence="1">PGP</shortName>
        <shortName evidence="1">PGPase</shortName>
        <ecNumber evidence="1">3.1.3.18</ecNumber>
    </recommendedName>
</protein>
<evidence type="ECO:0000255" key="1">
    <source>
        <dbReference type="HAMAP-Rule" id="MF_01419"/>
    </source>
</evidence>
<dbReference type="EC" id="3.1.3.18" evidence="1"/>
<dbReference type="EMBL" id="CP001014">
    <property type="protein sequence ID" value="ACB39803.1"/>
    <property type="molecule type" value="Genomic_DNA"/>
</dbReference>
<dbReference type="RefSeq" id="WP_012350223.1">
    <property type="nucleotide sequence ID" value="NC_010525.1"/>
</dbReference>
<dbReference type="SMR" id="B1YDE0"/>
<dbReference type="STRING" id="444157.Tneu_0866"/>
<dbReference type="GeneID" id="6164311"/>
<dbReference type="KEGG" id="tne:Tneu_0866"/>
<dbReference type="eggNOG" id="arCOG01213">
    <property type="taxonomic scope" value="Archaea"/>
</dbReference>
<dbReference type="HOGENOM" id="CLU_044146_2_0_2"/>
<dbReference type="OrthoDB" id="120822at2157"/>
<dbReference type="Proteomes" id="UP000001694">
    <property type="component" value="Chromosome"/>
</dbReference>
<dbReference type="GO" id="GO:0005829">
    <property type="term" value="C:cytosol"/>
    <property type="evidence" value="ECO:0007669"/>
    <property type="project" value="TreeGrafter"/>
</dbReference>
<dbReference type="GO" id="GO:0000287">
    <property type="term" value="F:magnesium ion binding"/>
    <property type="evidence" value="ECO:0007669"/>
    <property type="project" value="InterPro"/>
</dbReference>
<dbReference type="GO" id="GO:0008967">
    <property type="term" value="F:phosphoglycolate phosphatase activity"/>
    <property type="evidence" value="ECO:0007669"/>
    <property type="project" value="UniProtKB-UniRule"/>
</dbReference>
<dbReference type="Gene3D" id="3.90.1070.10">
    <property type="match status" value="1"/>
</dbReference>
<dbReference type="Gene3D" id="3.40.50.1000">
    <property type="entry name" value="HAD superfamily/HAD-like"/>
    <property type="match status" value="1"/>
</dbReference>
<dbReference type="HAMAP" id="MF_01419">
    <property type="entry name" value="GPH_hydrolase_arch"/>
    <property type="match status" value="1"/>
</dbReference>
<dbReference type="InterPro" id="IPR036412">
    <property type="entry name" value="HAD-like_sf"/>
</dbReference>
<dbReference type="InterPro" id="IPR023214">
    <property type="entry name" value="HAD_sf"/>
</dbReference>
<dbReference type="InterPro" id="IPR006382">
    <property type="entry name" value="PGPase"/>
</dbReference>
<dbReference type="NCBIfam" id="TIGR01487">
    <property type="entry name" value="Pglycolate_arch"/>
    <property type="match status" value="1"/>
</dbReference>
<dbReference type="PANTHER" id="PTHR10000:SF8">
    <property type="entry name" value="HAD SUPERFAMILY HYDROLASE-LIKE, TYPE 3"/>
    <property type="match status" value="1"/>
</dbReference>
<dbReference type="PANTHER" id="PTHR10000">
    <property type="entry name" value="PHOSPHOSERINE PHOSPHATASE"/>
    <property type="match status" value="1"/>
</dbReference>
<dbReference type="Pfam" id="PF08282">
    <property type="entry name" value="Hydrolase_3"/>
    <property type="match status" value="2"/>
</dbReference>
<dbReference type="SUPFAM" id="SSF56784">
    <property type="entry name" value="HAD-like"/>
    <property type="match status" value="1"/>
</dbReference>
<comment type="function">
    <text evidence="1">Catalyzes the dephosphorylation of 2-phosphoglycolate.</text>
</comment>
<comment type="catalytic activity">
    <reaction evidence="1">
        <text>2-phosphoglycolate + H2O = glycolate + phosphate</text>
        <dbReference type="Rhea" id="RHEA:14369"/>
        <dbReference type="ChEBI" id="CHEBI:15377"/>
        <dbReference type="ChEBI" id="CHEBI:29805"/>
        <dbReference type="ChEBI" id="CHEBI:43474"/>
        <dbReference type="ChEBI" id="CHEBI:58033"/>
        <dbReference type="EC" id="3.1.3.18"/>
    </reaction>
</comment>
<comment type="cofactor">
    <cofactor evidence="1">
        <name>Mg(2+)</name>
        <dbReference type="ChEBI" id="CHEBI:18420"/>
    </cofactor>
</comment>
<comment type="similarity">
    <text evidence="1">Belongs to the archaeal SPP-like hydrolase family.</text>
</comment>
<reference key="1">
    <citation type="submission" date="2008-03" db="EMBL/GenBank/DDBJ databases">
        <title>Complete sequence of Thermoproteus neutrophilus V24Sta.</title>
        <authorList>
            <consortium name="US DOE Joint Genome Institute"/>
            <person name="Copeland A."/>
            <person name="Lucas S."/>
            <person name="Lapidus A."/>
            <person name="Glavina del Rio T."/>
            <person name="Dalin E."/>
            <person name="Tice H."/>
            <person name="Bruce D."/>
            <person name="Goodwin L."/>
            <person name="Pitluck S."/>
            <person name="Sims D."/>
            <person name="Brettin T."/>
            <person name="Detter J.C."/>
            <person name="Han C."/>
            <person name="Kuske C.R."/>
            <person name="Schmutz J."/>
            <person name="Larimer F."/>
            <person name="Land M."/>
            <person name="Hauser L."/>
            <person name="Kyrpides N."/>
            <person name="Mikhailova N."/>
            <person name="Biddle J.F."/>
            <person name="Zhang Z."/>
            <person name="Fitz-Gibbon S.T."/>
            <person name="Lowe T.M."/>
            <person name="Saltikov C."/>
            <person name="House C.H."/>
            <person name="Richardson P."/>
        </authorList>
    </citation>
    <scope>NUCLEOTIDE SEQUENCE [LARGE SCALE GENOMIC DNA]</scope>
    <source>
        <strain>DSM 2338 / JCM 9278 / NBRC 100436 / V24Sta</strain>
    </source>
</reference>
<accession>B1YDE0</accession>
<keyword id="KW-0119">Carbohydrate metabolism</keyword>
<keyword id="KW-0378">Hydrolase</keyword>
<keyword id="KW-0460">Magnesium</keyword>
<keyword id="KW-0479">Metal-binding</keyword>
<proteinExistence type="inferred from homology"/>
<feature type="chain" id="PRO_1000145630" description="Phosphoglycolate phosphatase">
    <location>
        <begin position="1"/>
        <end position="228"/>
    </location>
</feature>
<feature type="active site" description="Nucleophile" evidence="1">
    <location>
        <position position="9"/>
    </location>
</feature>
<feature type="binding site" evidence="1">
    <location>
        <position position="9"/>
    </location>
    <ligand>
        <name>Mg(2+)</name>
        <dbReference type="ChEBI" id="CHEBI:18420"/>
    </ligand>
</feature>
<feature type="binding site" evidence="1">
    <location>
        <position position="11"/>
    </location>
    <ligand>
        <name>Mg(2+)</name>
        <dbReference type="ChEBI" id="CHEBI:18420"/>
    </ligand>
</feature>
<feature type="binding site" evidence="1">
    <location>
        <position position="151"/>
    </location>
    <ligand>
        <name>substrate</name>
    </ligand>
</feature>
<feature type="binding site" evidence="1">
    <location>
        <position position="174"/>
    </location>
    <ligand>
        <name>Mg(2+)</name>
        <dbReference type="ChEBI" id="CHEBI:18420"/>
    </ligand>
</feature>
<feature type="binding site" evidence="1">
    <location>
        <position position="178"/>
    </location>
    <ligand>
        <name>Mg(2+)</name>
        <dbReference type="ChEBI" id="CHEBI:18420"/>
    </ligand>
</feature>
<gene>
    <name type="ordered locus">Tneu_0866</name>
</gene>
<sequence>MGCKVLVVDLDGTLTLSRNTYELSVEALLALRRARDAGIRVVLATANGLDFALTVARYLGVRDVIAENGCLVHIDGETHELCSGDMSEVDRAVLATGAVAPSHQNKCRRFDLAYVPLVENAVERVKAAVRPGYVVDSSGYAIHVRPAGADKGAAVRWLCERLGVSCGWVAAVGDSDVDAGMLATAWGIAVGNATEAAKRAARAVVRGPSGLGFKEAVDLILSGGACAP</sequence>
<name>PGP_PYRNV</name>
<organism>
    <name type="scientific">Pyrobaculum neutrophilum (strain DSM 2338 / JCM 9278 / NBRC 100436 / V24Sta)</name>
    <name type="common">Thermoproteus neutrophilus</name>
    <dbReference type="NCBI Taxonomy" id="444157"/>
    <lineage>
        <taxon>Archaea</taxon>
        <taxon>Thermoproteota</taxon>
        <taxon>Thermoprotei</taxon>
        <taxon>Thermoproteales</taxon>
        <taxon>Thermoproteaceae</taxon>
        <taxon>Pyrobaculum</taxon>
    </lineage>
</organism>